<accession>Q62EM2</accession>
<feature type="chain" id="PRO_0000198438" description="Ribonuclease P protein component">
    <location>
        <begin position="1"/>
        <end position="136"/>
    </location>
</feature>
<reference key="1">
    <citation type="journal article" date="2004" name="Proc. Natl. Acad. Sci. U.S.A.">
        <title>Structural flexibility in the Burkholderia mallei genome.</title>
        <authorList>
            <person name="Nierman W.C."/>
            <person name="DeShazer D."/>
            <person name="Kim H.S."/>
            <person name="Tettelin H."/>
            <person name="Nelson K.E."/>
            <person name="Feldblyum T.V."/>
            <person name="Ulrich R.L."/>
            <person name="Ronning C.M."/>
            <person name="Brinkac L.M."/>
            <person name="Daugherty S.C."/>
            <person name="Davidsen T.D."/>
            <person name="DeBoy R.T."/>
            <person name="Dimitrov G."/>
            <person name="Dodson R.J."/>
            <person name="Durkin A.S."/>
            <person name="Gwinn M.L."/>
            <person name="Haft D.H."/>
            <person name="Khouri H.M."/>
            <person name="Kolonay J.F."/>
            <person name="Madupu R."/>
            <person name="Mohammoud Y."/>
            <person name="Nelson W.C."/>
            <person name="Radune D."/>
            <person name="Romero C.M."/>
            <person name="Sarria S."/>
            <person name="Selengut J."/>
            <person name="Shamblin C."/>
            <person name="Sullivan S.A."/>
            <person name="White O."/>
            <person name="Yu Y."/>
            <person name="Zafar N."/>
            <person name="Zhou L."/>
            <person name="Fraser C.M."/>
        </authorList>
    </citation>
    <scope>NUCLEOTIDE SEQUENCE [LARGE SCALE GENOMIC DNA]</scope>
    <source>
        <strain>ATCC 23344</strain>
    </source>
</reference>
<gene>
    <name evidence="1" type="primary">rnpA</name>
    <name type="ordered locus">BMA3399</name>
</gene>
<protein>
    <recommendedName>
        <fullName evidence="1">Ribonuclease P protein component</fullName>
        <shortName evidence="1">RNase P protein</shortName>
        <shortName evidence="1">RNaseP protein</shortName>
        <ecNumber evidence="1">3.1.26.5</ecNumber>
    </recommendedName>
    <alternativeName>
        <fullName evidence="1">Protein C5</fullName>
    </alternativeName>
</protein>
<comment type="function">
    <text evidence="1">RNaseP catalyzes the removal of the 5'-leader sequence from pre-tRNA to produce the mature 5'-terminus. It can also cleave other RNA substrates such as 4.5S RNA. The protein component plays an auxiliary but essential role in vivo by binding to the 5'-leader sequence and broadening the substrate specificity of the ribozyme.</text>
</comment>
<comment type="catalytic activity">
    <reaction evidence="1">
        <text>Endonucleolytic cleavage of RNA, removing 5'-extranucleotides from tRNA precursor.</text>
        <dbReference type="EC" id="3.1.26.5"/>
    </reaction>
</comment>
<comment type="subunit">
    <text evidence="1">Consists of a catalytic RNA component (M1 or rnpB) and a protein subunit.</text>
</comment>
<comment type="similarity">
    <text evidence="1">Belongs to the RnpA family.</text>
</comment>
<organism>
    <name type="scientific">Burkholderia mallei (strain ATCC 23344)</name>
    <dbReference type="NCBI Taxonomy" id="243160"/>
    <lineage>
        <taxon>Bacteria</taxon>
        <taxon>Pseudomonadati</taxon>
        <taxon>Pseudomonadota</taxon>
        <taxon>Betaproteobacteria</taxon>
        <taxon>Burkholderiales</taxon>
        <taxon>Burkholderiaceae</taxon>
        <taxon>Burkholderia</taxon>
        <taxon>pseudomallei group</taxon>
    </lineage>
</organism>
<keyword id="KW-0255">Endonuclease</keyword>
<keyword id="KW-0378">Hydrolase</keyword>
<keyword id="KW-0540">Nuclease</keyword>
<keyword id="KW-1185">Reference proteome</keyword>
<keyword id="KW-0694">RNA-binding</keyword>
<keyword id="KW-0819">tRNA processing</keyword>
<sequence>MQASAAFPKAARLLKTDEFSSVFRLRPWRRTAHFVIYGKPTGRDARLGLVIGKKYAARAVTRNLVKRLAREAFRTRRAEFAGWDILLRLHTRFDKKAMPSAASAPLAALCAGEIRELLDRAAREVARRNGAKPASE</sequence>
<evidence type="ECO:0000255" key="1">
    <source>
        <dbReference type="HAMAP-Rule" id="MF_00227"/>
    </source>
</evidence>
<proteinExistence type="inferred from homology"/>
<dbReference type="EC" id="3.1.26.5" evidence="1"/>
<dbReference type="EMBL" id="CP000010">
    <property type="protein sequence ID" value="AAU48916.1"/>
    <property type="molecule type" value="Genomic_DNA"/>
</dbReference>
<dbReference type="RefSeq" id="YP_104856.1">
    <property type="nucleotide sequence ID" value="NC_006348.1"/>
</dbReference>
<dbReference type="SMR" id="Q62EM2"/>
<dbReference type="KEGG" id="bma:BMA3399"/>
<dbReference type="PATRIC" id="fig|243160.12.peg.3489"/>
<dbReference type="eggNOG" id="COG0594">
    <property type="taxonomic scope" value="Bacteria"/>
</dbReference>
<dbReference type="HOGENOM" id="CLU_117179_11_1_4"/>
<dbReference type="Proteomes" id="UP000006693">
    <property type="component" value="Chromosome 1"/>
</dbReference>
<dbReference type="GO" id="GO:0030677">
    <property type="term" value="C:ribonuclease P complex"/>
    <property type="evidence" value="ECO:0007669"/>
    <property type="project" value="TreeGrafter"/>
</dbReference>
<dbReference type="GO" id="GO:0042781">
    <property type="term" value="F:3'-tRNA processing endoribonuclease activity"/>
    <property type="evidence" value="ECO:0007669"/>
    <property type="project" value="TreeGrafter"/>
</dbReference>
<dbReference type="GO" id="GO:0004526">
    <property type="term" value="F:ribonuclease P activity"/>
    <property type="evidence" value="ECO:0007669"/>
    <property type="project" value="UniProtKB-UniRule"/>
</dbReference>
<dbReference type="GO" id="GO:0000049">
    <property type="term" value="F:tRNA binding"/>
    <property type="evidence" value="ECO:0007669"/>
    <property type="project" value="UniProtKB-UniRule"/>
</dbReference>
<dbReference type="GO" id="GO:0001682">
    <property type="term" value="P:tRNA 5'-leader removal"/>
    <property type="evidence" value="ECO:0007669"/>
    <property type="project" value="UniProtKB-UniRule"/>
</dbReference>
<dbReference type="Gene3D" id="3.30.230.10">
    <property type="match status" value="1"/>
</dbReference>
<dbReference type="HAMAP" id="MF_00227">
    <property type="entry name" value="RNase_P"/>
    <property type="match status" value="1"/>
</dbReference>
<dbReference type="InterPro" id="IPR020568">
    <property type="entry name" value="Ribosomal_Su5_D2-typ_SF"/>
</dbReference>
<dbReference type="InterPro" id="IPR014721">
    <property type="entry name" value="Ribsml_uS5_D2-typ_fold_subgr"/>
</dbReference>
<dbReference type="InterPro" id="IPR000100">
    <property type="entry name" value="RNase_P"/>
</dbReference>
<dbReference type="InterPro" id="IPR020539">
    <property type="entry name" value="RNase_P_CS"/>
</dbReference>
<dbReference type="NCBIfam" id="TIGR00188">
    <property type="entry name" value="rnpA"/>
    <property type="match status" value="1"/>
</dbReference>
<dbReference type="PANTHER" id="PTHR33992">
    <property type="entry name" value="RIBONUCLEASE P PROTEIN COMPONENT"/>
    <property type="match status" value="1"/>
</dbReference>
<dbReference type="PANTHER" id="PTHR33992:SF1">
    <property type="entry name" value="RIBONUCLEASE P PROTEIN COMPONENT"/>
    <property type="match status" value="1"/>
</dbReference>
<dbReference type="Pfam" id="PF00825">
    <property type="entry name" value="Ribonuclease_P"/>
    <property type="match status" value="1"/>
</dbReference>
<dbReference type="SUPFAM" id="SSF54211">
    <property type="entry name" value="Ribosomal protein S5 domain 2-like"/>
    <property type="match status" value="1"/>
</dbReference>
<dbReference type="PROSITE" id="PS00648">
    <property type="entry name" value="RIBONUCLEASE_P"/>
    <property type="match status" value="1"/>
</dbReference>
<name>RNPA_BURMA</name>